<accession>A6MW13</accession>
<organism>
    <name type="scientific">Rhodomonas salina</name>
    <name type="common">Cryptomonas salina</name>
    <dbReference type="NCBI Taxonomy" id="52970"/>
    <lineage>
        <taxon>Eukaryota</taxon>
        <taxon>Cryptophyceae</taxon>
        <taxon>Pyrenomonadales</taxon>
        <taxon>Pyrenomonadaceae</taxon>
        <taxon>Rhodomonas</taxon>
    </lineage>
</organism>
<keyword id="KW-0150">Chloroplast</keyword>
<keyword id="KW-0934">Plastid</keyword>
<keyword id="KW-0687">Ribonucleoprotein</keyword>
<keyword id="KW-0689">Ribosomal protein</keyword>
<keyword id="KW-0694">RNA-binding</keyword>
<keyword id="KW-0699">rRNA-binding</keyword>
<sequence length="181" mass="20390">MSQSLKTYYKEKVVPLLMETFEYKNIHEVPKITKITINRGLGEASKNNKALESSVQELAIISGQQPVITKAKKSVAGFKIRDGMPVGIAVTLRSKMMYAFLERLIHLSLPRIRDFKGISVQLFDGRGNYNLGLKEQLIFPEIEYDRIDQIRGMDIAITTTAKTQQEGIALLKALGMPFNDN</sequence>
<geneLocation type="chloroplast"/>
<proteinExistence type="inferred from homology"/>
<protein>
    <recommendedName>
        <fullName evidence="2">Large ribosomal subunit protein uL5c</fullName>
    </recommendedName>
    <alternativeName>
        <fullName>50S ribosomal protein L5, chloroplastic</fullName>
    </alternativeName>
</protein>
<evidence type="ECO:0000250" key="1"/>
<evidence type="ECO:0000305" key="2"/>
<name>RK5_RHDSA</name>
<gene>
    <name type="primary">rpl5</name>
</gene>
<feature type="chain" id="PRO_0000365651" description="Large ribosomal subunit protein uL5c">
    <location>
        <begin position="1"/>
        <end position="181"/>
    </location>
</feature>
<reference key="1">
    <citation type="journal article" date="2007" name="Mol. Biol. Evol.">
        <title>Plastid genome sequence of the cryptophyte alga Rhodomonas salina CCMP1319: lateral transfer of putative DNA replication machinery and a test of chromist plastid phylogeny.</title>
        <authorList>
            <person name="Khan H."/>
            <person name="Parks N."/>
            <person name="Kozera C."/>
            <person name="Curtis B.A."/>
            <person name="Parsons B.J."/>
            <person name="Bowman S."/>
            <person name="Archibald J.M."/>
        </authorList>
    </citation>
    <scope>NUCLEOTIDE SEQUENCE [LARGE SCALE GENOMIC DNA]</scope>
    <source>
        <strain>CCMP1319 / NEPCC76 / CS-174</strain>
    </source>
</reference>
<comment type="function">
    <text evidence="1">Binds 5S rRNA, forms part of the central protuberance of the 50S subunit.</text>
</comment>
<comment type="subunit">
    <text evidence="1">Part of the 50S ribosomal subunit; contacts the 5S rRNA.</text>
</comment>
<comment type="subcellular location">
    <subcellularLocation>
        <location>Plastid</location>
        <location>Chloroplast</location>
    </subcellularLocation>
</comment>
<comment type="similarity">
    <text evidence="2">Belongs to the universal ribosomal protein uL5 family.</text>
</comment>
<dbReference type="EMBL" id="EF508371">
    <property type="protein sequence ID" value="ABO70776.1"/>
    <property type="molecule type" value="Genomic_DNA"/>
</dbReference>
<dbReference type="RefSeq" id="YP_001293592.1">
    <property type="nucleotide sequence ID" value="NC_009573.1"/>
</dbReference>
<dbReference type="SMR" id="A6MW13"/>
<dbReference type="GeneID" id="5228532"/>
<dbReference type="GO" id="GO:0009507">
    <property type="term" value="C:chloroplast"/>
    <property type="evidence" value="ECO:0007669"/>
    <property type="project" value="UniProtKB-SubCell"/>
</dbReference>
<dbReference type="GO" id="GO:1990904">
    <property type="term" value="C:ribonucleoprotein complex"/>
    <property type="evidence" value="ECO:0007669"/>
    <property type="project" value="UniProtKB-KW"/>
</dbReference>
<dbReference type="GO" id="GO:0005840">
    <property type="term" value="C:ribosome"/>
    <property type="evidence" value="ECO:0007669"/>
    <property type="project" value="UniProtKB-KW"/>
</dbReference>
<dbReference type="GO" id="GO:0019843">
    <property type="term" value="F:rRNA binding"/>
    <property type="evidence" value="ECO:0007669"/>
    <property type="project" value="UniProtKB-UniRule"/>
</dbReference>
<dbReference type="GO" id="GO:0003735">
    <property type="term" value="F:structural constituent of ribosome"/>
    <property type="evidence" value="ECO:0007669"/>
    <property type="project" value="InterPro"/>
</dbReference>
<dbReference type="GO" id="GO:0006412">
    <property type="term" value="P:translation"/>
    <property type="evidence" value="ECO:0007669"/>
    <property type="project" value="UniProtKB-UniRule"/>
</dbReference>
<dbReference type="FunFam" id="3.30.1440.10:FF:000001">
    <property type="entry name" value="50S ribosomal protein L5"/>
    <property type="match status" value="1"/>
</dbReference>
<dbReference type="Gene3D" id="3.30.1440.10">
    <property type="match status" value="1"/>
</dbReference>
<dbReference type="HAMAP" id="MF_01333_B">
    <property type="entry name" value="Ribosomal_uL5_B"/>
    <property type="match status" value="1"/>
</dbReference>
<dbReference type="InterPro" id="IPR002132">
    <property type="entry name" value="Ribosomal_uL5"/>
</dbReference>
<dbReference type="InterPro" id="IPR020930">
    <property type="entry name" value="Ribosomal_uL5_bac-type"/>
</dbReference>
<dbReference type="InterPro" id="IPR031309">
    <property type="entry name" value="Ribosomal_uL5_C"/>
</dbReference>
<dbReference type="InterPro" id="IPR020929">
    <property type="entry name" value="Ribosomal_uL5_CS"/>
</dbReference>
<dbReference type="InterPro" id="IPR022803">
    <property type="entry name" value="Ribosomal_uL5_dom_sf"/>
</dbReference>
<dbReference type="InterPro" id="IPR031310">
    <property type="entry name" value="Ribosomal_uL5_N"/>
</dbReference>
<dbReference type="NCBIfam" id="NF000585">
    <property type="entry name" value="PRK00010.1"/>
    <property type="match status" value="1"/>
</dbReference>
<dbReference type="PANTHER" id="PTHR11994">
    <property type="entry name" value="60S RIBOSOMAL PROTEIN L11-RELATED"/>
    <property type="match status" value="1"/>
</dbReference>
<dbReference type="Pfam" id="PF00281">
    <property type="entry name" value="Ribosomal_L5"/>
    <property type="match status" value="1"/>
</dbReference>
<dbReference type="Pfam" id="PF00673">
    <property type="entry name" value="Ribosomal_L5_C"/>
    <property type="match status" value="1"/>
</dbReference>
<dbReference type="PIRSF" id="PIRSF002161">
    <property type="entry name" value="Ribosomal_L5"/>
    <property type="match status" value="1"/>
</dbReference>
<dbReference type="SUPFAM" id="SSF55282">
    <property type="entry name" value="RL5-like"/>
    <property type="match status" value="1"/>
</dbReference>
<dbReference type="PROSITE" id="PS00358">
    <property type="entry name" value="RIBOSOMAL_L5"/>
    <property type="match status" value="1"/>
</dbReference>